<name>BGL40_ARATH</name>
<evidence type="ECO:0000250" key="1">
    <source>
        <dbReference type="UniProtKB" id="O64879"/>
    </source>
</evidence>
<evidence type="ECO:0000250" key="2">
    <source>
        <dbReference type="UniProtKB" id="Q1XH05"/>
    </source>
</evidence>
<evidence type="ECO:0000250" key="3">
    <source>
        <dbReference type="UniProtKB" id="Q7XSK0"/>
    </source>
</evidence>
<evidence type="ECO:0000250" key="4">
    <source>
        <dbReference type="UniProtKB" id="Q9SPP9"/>
    </source>
</evidence>
<evidence type="ECO:0000255" key="5"/>
<evidence type="ECO:0000255" key="6">
    <source>
        <dbReference type="PROSITE-ProRule" id="PRU00498"/>
    </source>
</evidence>
<evidence type="ECO:0000303" key="7">
    <source>
    </source>
</evidence>
<evidence type="ECO:0000305" key="8"/>
<evidence type="ECO:0000312" key="9">
    <source>
        <dbReference type="Araport" id="AT1G26560"/>
    </source>
</evidence>
<evidence type="ECO:0000312" key="10">
    <source>
        <dbReference type="EMBL" id="AAF98564.1"/>
    </source>
</evidence>
<reference key="1">
    <citation type="journal article" date="2000" name="Nature">
        <title>Sequence and analysis of chromosome 1 of the plant Arabidopsis thaliana.</title>
        <authorList>
            <person name="Theologis A."/>
            <person name="Ecker J.R."/>
            <person name="Palm C.J."/>
            <person name="Federspiel N.A."/>
            <person name="Kaul S."/>
            <person name="White O."/>
            <person name="Alonso J."/>
            <person name="Altafi H."/>
            <person name="Araujo R."/>
            <person name="Bowman C.L."/>
            <person name="Brooks S.Y."/>
            <person name="Buehler E."/>
            <person name="Chan A."/>
            <person name="Chao Q."/>
            <person name="Chen H."/>
            <person name="Cheuk R.F."/>
            <person name="Chin C.W."/>
            <person name="Chung M.K."/>
            <person name="Conn L."/>
            <person name="Conway A.B."/>
            <person name="Conway A.R."/>
            <person name="Creasy T.H."/>
            <person name="Dewar K."/>
            <person name="Dunn P."/>
            <person name="Etgu P."/>
            <person name="Feldblyum T.V."/>
            <person name="Feng J.-D."/>
            <person name="Fong B."/>
            <person name="Fujii C.Y."/>
            <person name="Gill J.E."/>
            <person name="Goldsmith A.D."/>
            <person name="Haas B."/>
            <person name="Hansen N.F."/>
            <person name="Hughes B."/>
            <person name="Huizar L."/>
            <person name="Hunter J.L."/>
            <person name="Jenkins J."/>
            <person name="Johnson-Hopson C."/>
            <person name="Khan S."/>
            <person name="Khaykin E."/>
            <person name="Kim C.J."/>
            <person name="Koo H.L."/>
            <person name="Kremenetskaia I."/>
            <person name="Kurtz D.B."/>
            <person name="Kwan A."/>
            <person name="Lam B."/>
            <person name="Langin-Hooper S."/>
            <person name="Lee A."/>
            <person name="Lee J.M."/>
            <person name="Lenz C.A."/>
            <person name="Li J.H."/>
            <person name="Li Y.-P."/>
            <person name="Lin X."/>
            <person name="Liu S.X."/>
            <person name="Liu Z.A."/>
            <person name="Luros J.S."/>
            <person name="Maiti R."/>
            <person name="Marziali A."/>
            <person name="Militscher J."/>
            <person name="Miranda M."/>
            <person name="Nguyen M."/>
            <person name="Nierman W.C."/>
            <person name="Osborne B.I."/>
            <person name="Pai G."/>
            <person name="Peterson J."/>
            <person name="Pham P.K."/>
            <person name="Rizzo M."/>
            <person name="Rooney T."/>
            <person name="Rowley D."/>
            <person name="Sakano H."/>
            <person name="Salzberg S.L."/>
            <person name="Schwartz J.R."/>
            <person name="Shinn P."/>
            <person name="Southwick A.M."/>
            <person name="Sun H."/>
            <person name="Tallon L.J."/>
            <person name="Tambunga G."/>
            <person name="Toriumi M.J."/>
            <person name="Town C.D."/>
            <person name="Utterback T."/>
            <person name="Van Aken S."/>
            <person name="Vaysberg M."/>
            <person name="Vysotskaia V.S."/>
            <person name="Walker M."/>
            <person name="Wu D."/>
            <person name="Yu G."/>
            <person name="Fraser C.M."/>
            <person name="Venter J.C."/>
            <person name="Davis R.W."/>
        </authorList>
    </citation>
    <scope>NUCLEOTIDE SEQUENCE [LARGE SCALE GENOMIC DNA]</scope>
    <source>
        <strain>cv. Columbia</strain>
    </source>
</reference>
<reference key="2">
    <citation type="journal article" date="2017" name="Plant J.">
        <title>Araport11: a complete reannotation of the Arabidopsis thaliana reference genome.</title>
        <authorList>
            <person name="Cheng C.Y."/>
            <person name="Krishnakumar V."/>
            <person name="Chan A.P."/>
            <person name="Thibaud-Nissen F."/>
            <person name="Schobel S."/>
            <person name="Town C.D."/>
        </authorList>
    </citation>
    <scope>GENOME REANNOTATION</scope>
    <source>
        <strain>cv. Columbia</strain>
    </source>
</reference>
<reference key="3">
    <citation type="journal article" date="2003" name="Science">
        <title>Empirical analysis of transcriptional activity in the Arabidopsis genome.</title>
        <authorList>
            <person name="Yamada K."/>
            <person name="Lim J."/>
            <person name="Dale J.M."/>
            <person name="Chen H."/>
            <person name="Shinn P."/>
            <person name="Palm C.J."/>
            <person name="Southwick A.M."/>
            <person name="Wu H.C."/>
            <person name="Kim C.J."/>
            <person name="Nguyen M."/>
            <person name="Pham P.K."/>
            <person name="Cheuk R.F."/>
            <person name="Karlin-Newmann G."/>
            <person name="Liu S.X."/>
            <person name="Lam B."/>
            <person name="Sakano H."/>
            <person name="Wu T."/>
            <person name="Yu G."/>
            <person name="Miranda M."/>
            <person name="Quach H.L."/>
            <person name="Tripp M."/>
            <person name="Chang C.H."/>
            <person name="Lee J.M."/>
            <person name="Toriumi M.J."/>
            <person name="Chan M.M."/>
            <person name="Tang C.C."/>
            <person name="Onodera C.S."/>
            <person name="Deng J.M."/>
            <person name="Akiyama K."/>
            <person name="Ansari Y."/>
            <person name="Arakawa T."/>
            <person name="Banh J."/>
            <person name="Banno F."/>
            <person name="Bowser L."/>
            <person name="Brooks S.Y."/>
            <person name="Carninci P."/>
            <person name="Chao Q."/>
            <person name="Choy N."/>
            <person name="Enju A."/>
            <person name="Goldsmith A.D."/>
            <person name="Gurjal M."/>
            <person name="Hansen N.F."/>
            <person name="Hayashizaki Y."/>
            <person name="Johnson-Hopson C."/>
            <person name="Hsuan V.W."/>
            <person name="Iida K."/>
            <person name="Karnes M."/>
            <person name="Khan S."/>
            <person name="Koesema E."/>
            <person name="Ishida J."/>
            <person name="Jiang P.X."/>
            <person name="Jones T."/>
            <person name="Kawai J."/>
            <person name="Kamiya A."/>
            <person name="Meyers C."/>
            <person name="Nakajima M."/>
            <person name="Narusaka M."/>
            <person name="Seki M."/>
            <person name="Sakurai T."/>
            <person name="Satou M."/>
            <person name="Tamse R."/>
            <person name="Vaysberg M."/>
            <person name="Wallender E.K."/>
            <person name="Wong C."/>
            <person name="Yamamura Y."/>
            <person name="Yuan S."/>
            <person name="Shinozaki K."/>
            <person name="Davis R.W."/>
            <person name="Theologis A."/>
            <person name="Ecker J.R."/>
        </authorList>
    </citation>
    <scope>NUCLEOTIDE SEQUENCE [LARGE SCALE MRNA]</scope>
    <source>
        <strain>cv. Columbia</strain>
    </source>
</reference>
<reference key="4">
    <citation type="submission" date="2002-03" db="EMBL/GenBank/DDBJ databases">
        <title>Full-length cDNA from Arabidopsis thaliana.</title>
        <authorList>
            <person name="Brover V.V."/>
            <person name="Troukhan M.E."/>
            <person name="Alexandrov N.A."/>
            <person name="Lu Y.-P."/>
            <person name="Flavell R.B."/>
            <person name="Feldmann K.A."/>
        </authorList>
    </citation>
    <scope>NUCLEOTIDE SEQUENCE [LARGE SCALE MRNA]</scope>
</reference>
<reference key="5">
    <citation type="submission" date="2005-03" db="EMBL/GenBank/DDBJ databases">
        <title>Large-scale analysis of RIKEN Arabidopsis full-length (RAFL) cDNAs.</title>
        <authorList>
            <person name="Totoki Y."/>
            <person name="Seki M."/>
            <person name="Ishida J."/>
            <person name="Nakajima M."/>
            <person name="Enju A."/>
            <person name="Kamiya A."/>
            <person name="Narusaka M."/>
            <person name="Shin-i T."/>
            <person name="Nakagawa M."/>
            <person name="Sakamoto N."/>
            <person name="Oishi K."/>
            <person name="Kohara Y."/>
            <person name="Kobayashi M."/>
            <person name="Toyoda A."/>
            <person name="Sakaki Y."/>
            <person name="Sakurai T."/>
            <person name="Iida K."/>
            <person name="Akiyama K."/>
            <person name="Satou M."/>
            <person name="Toyoda T."/>
            <person name="Konagaya A."/>
            <person name="Carninci P."/>
            <person name="Kawai J."/>
            <person name="Hayashizaki Y."/>
            <person name="Shinozaki K."/>
        </authorList>
    </citation>
    <scope>NUCLEOTIDE SEQUENCE [LARGE SCALE MRNA] OF 351-510</scope>
    <source>
        <strain>cv. Columbia</strain>
    </source>
</reference>
<reference key="6">
    <citation type="journal article" date="2004" name="Plant Mol. Biol.">
        <title>Functional genomic analysis of Arabidopsis thaliana glycoside hydrolase family 1.</title>
        <authorList>
            <person name="Xu Z."/>
            <person name="Escamilla-Trevino L.L."/>
            <person name="Zeng L."/>
            <person name="Lalgondar M."/>
            <person name="Bevan D.R."/>
            <person name="Winkel B.S.J."/>
            <person name="Mohamed A."/>
            <person name="Cheng C.-L."/>
            <person name="Shih M.-C."/>
            <person name="Poulton J.E."/>
            <person name="Esen A."/>
        </authorList>
    </citation>
    <scope>GENE FAMILY</scope>
    <scope>NOMENCLATURE</scope>
</reference>
<keyword id="KW-1015">Disulfide bond</keyword>
<keyword id="KW-0325">Glycoprotein</keyword>
<keyword id="KW-0326">Glycosidase</keyword>
<keyword id="KW-0378">Hydrolase</keyword>
<keyword id="KW-1185">Reference proteome</keyword>
<keyword id="KW-0732">Signal</keyword>
<protein>
    <recommendedName>
        <fullName evidence="7">Beta-glucosidase 40</fullName>
        <shortName evidence="7">AtBGLU40</shortName>
        <ecNumber evidence="1">3.2.1.21</ecNumber>
    </recommendedName>
</protein>
<sequence length="510" mass="58125">MAHRRLIMTMTKMMMMVTMMMMMDKTCICADISRGSFPKGFVFGTASSAFQHEGAVKAEGRGPTIWDTFSHTFGKITDFSNADVAVDQYHRYEEDVQLMKNMGMDAYRFSISWTRIFPNGVGHINEAGIDHYNKLINALLAKGIEPYVTLYHWDLPQALHDRYLGWLNPQIINDFAAYAEVCFQRFGDRVKHWITFNEPHTFAIQGYDVGLQAPGRCTILFKLTCREGNSSTEPYIVGHNVILTHATVSDIYRKKYKAKQGGSLGIAFDVMWFEPESNKTEDIEAAQRAQDFQLGWFLDPLMFGDYPSSMRSRVGSRLPVFTGSQSSLVKGSLDFVGINHYTTYYARNNATNLIGTLLHDAVSDSGTVTLPFKGLSTIGDRASSIWLYIVPRGMRSLMNYIKHRYGNPPVFITENGMDDPNSILISRKDALKDAKRIKYHHDYLSSLQASIKEDGCNVKGYFVWSLLDNWEWAAGYSSRFGLYFVDYRDNLKRYPKDSVHWFTSFLNSTS</sequence>
<organism>
    <name type="scientific">Arabidopsis thaliana</name>
    <name type="common">Mouse-ear cress</name>
    <dbReference type="NCBI Taxonomy" id="3702"/>
    <lineage>
        <taxon>Eukaryota</taxon>
        <taxon>Viridiplantae</taxon>
        <taxon>Streptophyta</taxon>
        <taxon>Embryophyta</taxon>
        <taxon>Tracheophyta</taxon>
        <taxon>Spermatophyta</taxon>
        <taxon>Magnoliopsida</taxon>
        <taxon>eudicotyledons</taxon>
        <taxon>Gunneridae</taxon>
        <taxon>Pentapetalae</taxon>
        <taxon>rosids</taxon>
        <taxon>malvids</taxon>
        <taxon>Brassicales</taxon>
        <taxon>Brassicaceae</taxon>
        <taxon>Camelineae</taxon>
        <taxon>Arabidopsis</taxon>
    </lineage>
</organism>
<comment type="catalytic activity">
    <reaction evidence="1">
        <text>Hydrolysis of terminal, non-reducing beta-D-glucosyl residues with release of beta-D-glucose.</text>
        <dbReference type="EC" id="3.2.1.21"/>
    </reaction>
</comment>
<comment type="similarity">
    <text evidence="8">Belongs to the glycosyl hydrolase 1 family.</text>
</comment>
<comment type="sequence caution" evidence="8">
    <conflict type="erroneous initiation">
        <sequence resource="EMBL-CDS" id="AAM61600"/>
    </conflict>
    <text>Truncated N-terminus.</text>
</comment>
<feature type="signal peptide" evidence="5">
    <location>
        <begin position="1"/>
        <end position="29"/>
    </location>
</feature>
<feature type="chain" id="PRO_0000390313" description="Beta-glucosidase 40">
    <location>
        <begin position="30"/>
        <end position="510"/>
    </location>
</feature>
<feature type="active site" description="Proton donor" evidence="3">
    <location>
        <position position="198"/>
    </location>
</feature>
<feature type="active site" description="Nucleophile" evidence="3">
    <location>
        <position position="414"/>
    </location>
</feature>
<feature type="binding site" evidence="3">
    <location>
        <position position="51"/>
    </location>
    <ligand>
        <name>a beta-D-glucoside</name>
        <dbReference type="ChEBI" id="CHEBI:22798"/>
    </ligand>
</feature>
<feature type="binding site" evidence="3">
    <location>
        <position position="152"/>
    </location>
    <ligand>
        <name>a beta-D-glucoside</name>
        <dbReference type="ChEBI" id="CHEBI:22798"/>
    </ligand>
</feature>
<feature type="binding site" evidence="3">
    <location>
        <begin position="197"/>
        <end position="198"/>
    </location>
    <ligand>
        <name>a beta-D-glucoside</name>
        <dbReference type="ChEBI" id="CHEBI:22798"/>
    </ligand>
</feature>
<feature type="binding site" evidence="3">
    <location>
        <position position="341"/>
    </location>
    <ligand>
        <name>a beta-D-glucoside</name>
        <dbReference type="ChEBI" id="CHEBI:22798"/>
    </ligand>
</feature>
<feature type="binding site" evidence="4">
    <location>
        <position position="414"/>
    </location>
    <ligand>
        <name>a beta-D-glucoside</name>
        <dbReference type="ChEBI" id="CHEBI:22798"/>
    </ligand>
</feature>
<feature type="binding site" evidence="3">
    <location>
        <position position="464"/>
    </location>
    <ligand>
        <name>a beta-D-glucoside</name>
        <dbReference type="ChEBI" id="CHEBI:22798"/>
    </ligand>
</feature>
<feature type="binding site" evidence="3">
    <location>
        <begin position="471"/>
        <end position="472"/>
    </location>
    <ligand>
        <name>a beta-D-glucoside</name>
        <dbReference type="ChEBI" id="CHEBI:22798"/>
    </ligand>
</feature>
<feature type="binding site" evidence="2">
    <location>
        <position position="480"/>
    </location>
    <ligand>
        <name>a beta-D-glucoside</name>
        <dbReference type="ChEBI" id="CHEBI:22798"/>
    </ligand>
</feature>
<feature type="glycosylation site" description="N-linked (GlcNAc...) asparagine" evidence="6">
    <location>
        <position position="229"/>
    </location>
</feature>
<feature type="glycosylation site" description="N-linked (GlcNAc...) asparagine" evidence="6">
    <location>
        <position position="278"/>
    </location>
</feature>
<feature type="glycosylation site" description="N-linked (GlcNAc...) asparagine" evidence="6">
    <location>
        <position position="349"/>
    </location>
</feature>
<feature type="glycosylation site" description="N-linked (GlcNAc...) asparagine" evidence="6">
    <location>
        <position position="507"/>
    </location>
</feature>
<feature type="disulfide bond" evidence="3">
    <location>
        <begin position="217"/>
        <end position="225"/>
    </location>
</feature>
<gene>
    <name evidence="7" type="primary">BGLU40</name>
    <name evidence="9" type="ordered locus">At1g26560</name>
    <name evidence="10" type="ORF">T1K7.7</name>
</gene>
<proteinExistence type="evidence at transcript level"/>
<accession>Q9FZE0</accession>
<accession>Q56ZF5</accession>
<accession>Q8LF56</accession>
<dbReference type="EC" id="3.2.1.21" evidence="1"/>
<dbReference type="EMBL" id="AC013427">
    <property type="protein sequence ID" value="AAF98564.1"/>
    <property type="molecule type" value="Genomic_DNA"/>
</dbReference>
<dbReference type="EMBL" id="CP002684">
    <property type="protein sequence ID" value="AEE30704.1"/>
    <property type="molecule type" value="Genomic_DNA"/>
</dbReference>
<dbReference type="EMBL" id="AY045927">
    <property type="protein sequence ID" value="AAK76601.1"/>
    <property type="molecule type" value="mRNA"/>
</dbReference>
<dbReference type="EMBL" id="AY142610">
    <property type="protein sequence ID" value="AAN13179.1"/>
    <property type="molecule type" value="mRNA"/>
</dbReference>
<dbReference type="EMBL" id="AY085043">
    <property type="protein sequence ID" value="AAM61600.1"/>
    <property type="status" value="ALT_INIT"/>
    <property type="molecule type" value="mRNA"/>
</dbReference>
<dbReference type="EMBL" id="AK221011">
    <property type="protein sequence ID" value="BAD94684.1"/>
    <property type="molecule type" value="mRNA"/>
</dbReference>
<dbReference type="PIR" id="F86392">
    <property type="entry name" value="F86392"/>
</dbReference>
<dbReference type="RefSeq" id="NP_173978.1">
    <property type="nucleotide sequence ID" value="NM_102418.4"/>
</dbReference>
<dbReference type="SMR" id="Q9FZE0"/>
<dbReference type="FunCoup" id="Q9FZE0">
    <property type="interactions" value="561"/>
</dbReference>
<dbReference type="STRING" id="3702.Q9FZE0"/>
<dbReference type="CAZy" id="GH1">
    <property type="family name" value="Glycoside Hydrolase Family 1"/>
</dbReference>
<dbReference type="GlyCosmos" id="Q9FZE0">
    <property type="glycosylation" value="4 sites, No reported glycans"/>
</dbReference>
<dbReference type="GlyGen" id="Q9FZE0">
    <property type="glycosylation" value="4 sites"/>
</dbReference>
<dbReference type="PaxDb" id="3702-AT1G26560.1"/>
<dbReference type="ProteomicsDB" id="240473"/>
<dbReference type="EnsemblPlants" id="AT1G26560.1">
    <property type="protein sequence ID" value="AT1G26560.1"/>
    <property type="gene ID" value="AT1G26560"/>
</dbReference>
<dbReference type="GeneID" id="839196"/>
<dbReference type="Gramene" id="AT1G26560.1">
    <property type="protein sequence ID" value="AT1G26560.1"/>
    <property type="gene ID" value="AT1G26560"/>
</dbReference>
<dbReference type="KEGG" id="ath:AT1G26560"/>
<dbReference type="Araport" id="AT1G26560"/>
<dbReference type="TAIR" id="AT1G26560">
    <property type="gene designation" value="BGLU40"/>
</dbReference>
<dbReference type="eggNOG" id="KOG0626">
    <property type="taxonomic scope" value="Eukaryota"/>
</dbReference>
<dbReference type="HOGENOM" id="CLU_001859_1_0_1"/>
<dbReference type="InParanoid" id="Q9FZE0"/>
<dbReference type="OMA" id="YGGWGSR"/>
<dbReference type="PhylomeDB" id="Q9FZE0"/>
<dbReference type="BioCyc" id="ARA:AT1G26560-MONOMER"/>
<dbReference type="PRO" id="PR:Q9FZE0"/>
<dbReference type="Proteomes" id="UP000006548">
    <property type="component" value="Chromosome 1"/>
</dbReference>
<dbReference type="ExpressionAtlas" id="Q9FZE0">
    <property type="expression patterns" value="baseline and differential"/>
</dbReference>
<dbReference type="GO" id="GO:0048046">
    <property type="term" value="C:apoplast"/>
    <property type="evidence" value="ECO:0007005"/>
    <property type="project" value="TAIR"/>
</dbReference>
<dbReference type="GO" id="GO:0008422">
    <property type="term" value="F:beta-glucosidase activity"/>
    <property type="evidence" value="ECO:0007669"/>
    <property type="project" value="UniProtKB-EC"/>
</dbReference>
<dbReference type="GO" id="GO:0005975">
    <property type="term" value="P:carbohydrate metabolic process"/>
    <property type="evidence" value="ECO:0007669"/>
    <property type="project" value="InterPro"/>
</dbReference>
<dbReference type="FunFam" id="3.20.20.80:FF:000020">
    <property type="entry name" value="Beta-glucosidase 12"/>
    <property type="match status" value="1"/>
</dbReference>
<dbReference type="Gene3D" id="3.20.20.80">
    <property type="entry name" value="Glycosidases"/>
    <property type="match status" value="1"/>
</dbReference>
<dbReference type="InterPro" id="IPR001360">
    <property type="entry name" value="Glyco_hydro_1"/>
</dbReference>
<dbReference type="InterPro" id="IPR033132">
    <property type="entry name" value="Glyco_hydro_1_N_CS"/>
</dbReference>
<dbReference type="InterPro" id="IPR017853">
    <property type="entry name" value="Glycoside_hydrolase_SF"/>
</dbReference>
<dbReference type="PANTHER" id="PTHR10353:SF302">
    <property type="entry name" value="BETA-GLUCOSIDASE 40"/>
    <property type="match status" value="1"/>
</dbReference>
<dbReference type="PANTHER" id="PTHR10353">
    <property type="entry name" value="GLYCOSYL HYDROLASE"/>
    <property type="match status" value="1"/>
</dbReference>
<dbReference type="Pfam" id="PF00232">
    <property type="entry name" value="Glyco_hydro_1"/>
    <property type="match status" value="1"/>
</dbReference>
<dbReference type="PRINTS" id="PR00131">
    <property type="entry name" value="GLHYDRLASE1"/>
</dbReference>
<dbReference type="SUPFAM" id="SSF51445">
    <property type="entry name" value="(Trans)glycosidases"/>
    <property type="match status" value="1"/>
</dbReference>
<dbReference type="PROSITE" id="PS00653">
    <property type="entry name" value="GLYCOSYL_HYDROL_F1_2"/>
    <property type="match status" value="1"/>
</dbReference>